<comment type="function">
    <text evidence="2">Receptor for adenosine. The activity of this receptor is mediated by G proteins which inhibits adenylyl cyclase.</text>
</comment>
<comment type="subcellular location">
    <subcellularLocation>
        <location evidence="4">Cell membrane</location>
        <topology evidence="5">Multi-pass membrane protein</topology>
    </subcellularLocation>
</comment>
<comment type="PTM">
    <text evidence="3">Phosphorylation on Thr-315 and Ser-316 may be crucial for rapid desensitization. Phosphorylation on Thr-315 may be necessary for phosphorylation on Ser-316 to occur.</text>
</comment>
<comment type="similarity">
    <text evidence="6">Belongs to the G-protein coupled receptor 1 family.</text>
</comment>
<dbReference type="EMBL" id="BC120305">
    <property type="protein sequence ID" value="AAI20306.1"/>
    <property type="molecule type" value="mRNA"/>
</dbReference>
<dbReference type="RefSeq" id="NP_001098081.1">
    <property type="nucleotide sequence ID" value="NM_001104611.2"/>
</dbReference>
<dbReference type="RefSeq" id="NP_001289697.1">
    <property type="nucleotide sequence ID" value="NM_001302768.1"/>
</dbReference>
<dbReference type="SMR" id="Q0VC81"/>
<dbReference type="FunCoup" id="Q0VC81">
    <property type="interactions" value="3"/>
</dbReference>
<dbReference type="STRING" id="9913.ENSBTAP00000073588"/>
<dbReference type="BindingDB" id="Q0VC81"/>
<dbReference type="ChEMBL" id="CHEMBL1287626"/>
<dbReference type="GlyCosmos" id="Q0VC81">
    <property type="glycosylation" value="1 site, No reported glycans"/>
</dbReference>
<dbReference type="GlyGen" id="Q0VC81">
    <property type="glycosylation" value="1 site"/>
</dbReference>
<dbReference type="PaxDb" id="9913-ENSBTAP00000010057"/>
<dbReference type="Ensembl" id="ENSBTAT00000010057.6">
    <property type="protein sequence ID" value="ENSBTAP00000010057.4"/>
    <property type="gene ID" value="ENSBTAG00000039738.4"/>
</dbReference>
<dbReference type="GeneID" id="780806"/>
<dbReference type="KEGG" id="bta:780806"/>
<dbReference type="CTD" id="140"/>
<dbReference type="VEuPathDB" id="HostDB:ENSBTAG00000039738"/>
<dbReference type="VGNC" id="VGNC:50194">
    <property type="gene designation" value="TMIGD3"/>
</dbReference>
<dbReference type="eggNOG" id="KOG3656">
    <property type="taxonomic scope" value="Eukaryota"/>
</dbReference>
<dbReference type="GeneTree" id="ENSGT01030000234555"/>
<dbReference type="HOGENOM" id="CLU_009579_11_5_1"/>
<dbReference type="InParanoid" id="Q0VC81"/>
<dbReference type="OMA" id="INCITYF"/>
<dbReference type="OrthoDB" id="284782at2759"/>
<dbReference type="TreeFam" id="TF325296"/>
<dbReference type="Reactome" id="R-BTA-417973">
    <property type="pathway name" value="Adenosine P1 receptors"/>
</dbReference>
<dbReference type="Reactome" id="R-BTA-418594">
    <property type="pathway name" value="G alpha (i) signalling events"/>
</dbReference>
<dbReference type="Proteomes" id="UP000009136">
    <property type="component" value="Chromosome 3"/>
</dbReference>
<dbReference type="Bgee" id="ENSBTAG00000039738">
    <property type="expression patterns" value="Expressed in semen and 101 other cell types or tissues"/>
</dbReference>
<dbReference type="GO" id="GO:0030425">
    <property type="term" value="C:dendrite"/>
    <property type="evidence" value="ECO:0000318"/>
    <property type="project" value="GO_Central"/>
</dbReference>
<dbReference type="GO" id="GO:0005886">
    <property type="term" value="C:plasma membrane"/>
    <property type="evidence" value="ECO:0000318"/>
    <property type="project" value="GO_Central"/>
</dbReference>
<dbReference type="GO" id="GO:0045202">
    <property type="term" value="C:synapse"/>
    <property type="evidence" value="ECO:0000318"/>
    <property type="project" value="GO_Central"/>
</dbReference>
<dbReference type="GO" id="GO:0001609">
    <property type="term" value="F:G protein-coupled adenosine receptor activity"/>
    <property type="evidence" value="ECO:0000318"/>
    <property type="project" value="GO_Central"/>
</dbReference>
<dbReference type="GO" id="GO:0001973">
    <property type="term" value="P:G protein-coupled adenosine receptor signaling pathway"/>
    <property type="evidence" value="ECO:0000318"/>
    <property type="project" value="GO_Central"/>
</dbReference>
<dbReference type="CDD" id="cd15070">
    <property type="entry name" value="7tmA_Adenosine_R_A3"/>
    <property type="match status" value="1"/>
</dbReference>
<dbReference type="FunFam" id="1.20.1070.10:FF:000061">
    <property type="entry name" value="Adenosine receptor A2"/>
    <property type="match status" value="1"/>
</dbReference>
<dbReference type="Gene3D" id="1.20.1070.10">
    <property type="entry name" value="Rhodopsin 7-helix transmembrane proteins"/>
    <property type="match status" value="1"/>
</dbReference>
<dbReference type="InterPro" id="IPR000466">
    <property type="entry name" value="Adeno_A3_rcpt"/>
</dbReference>
<dbReference type="InterPro" id="IPR001634">
    <property type="entry name" value="Adenosn_rcpt"/>
</dbReference>
<dbReference type="InterPro" id="IPR000276">
    <property type="entry name" value="GPCR_Rhodpsn"/>
</dbReference>
<dbReference type="InterPro" id="IPR017452">
    <property type="entry name" value="GPCR_Rhodpsn_7TM"/>
</dbReference>
<dbReference type="PANTHER" id="PTHR24246:SF2">
    <property type="entry name" value="ADENOSINE RECEPTOR A3"/>
    <property type="match status" value="1"/>
</dbReference>
<dbReference type="PANTHER" id="PTHR24246">
    <property type="entry name" value="OLFACTORY RECEPTOR AND ADENOSINE RECEPTOR"/>
    <property type="match status" value="1"/>
</dbReference>
<dbReference type="Pfam" id="PF00001">
    <property type="entry name" value="7tm_1"/>
    <property type="match status" value="1"/>
</dbReference>
<dbReference type="PRINTS" id="PR00555">
    <property type="entry name" value="ADENOSINEA3R"/>
</dbReference>
<dbReference type="PRINTS" id="PR00424">
    <property type="entry name" value="ADENOSINER"/>
</dbReference>
<dbReference type="PRINTS" id="PR00237">
    <property type="entry name" value="GPCRRHODOPSN"/>
</dbReference>
<dbReference type="SMART" id="SM01381">
    <property type="entry name" value="7TM_GPCR_Srsx"/>
    <property type="match status" value="1"/>
</dbReference>
<dbReference type="SUPFAM" id="SSF81321">
    <property type="entry name" value="Family A G protein-coupled receptor-like"/>
    <property type="match status" value="1"/>
</dbReference>
<dbReference type="PROSITE" id="PS00237">
    <property type="entry name" value="G_PROTEIN_RECEP_F1_1"/>
    <property type="match status" value="1"/>
</dbReference>
<dbReference type="PROSITE" id="PS50262">
    <property type="entry name" value="G_PROTEIN_RECEP_F1_2"/>
    <property type="match status" value="1"/>
</dbReference>
<proteinExistence type="evidence at transcript level"/>
<accession>Q0VC81</accession>
<sequence length="317" mass="35911">MPVNSTAVSLASVTYISVEILIGLCAIVGNVLVIWVVKLNPSLQTTTFYFIVSLALADIAVGVLVMPLAIVISLGVTIHFYSCLLMTCLLMIFTHASIMSLLAIAVDRYLRVKLTVRYRRVTTQRRIWLALGLCWLVSFLVGLTPMFGWNMKLSSADKNLTFLPCQFRSVMRMDYMVYFSFFTWILIPLVVMCAIYFDIFYVIRNRLSQNFSGSKETGAFYGREFKTAKSLSLVLFLFALSWLPLSIINCIIYFNGEVPQIVLYLGILLSHANSMMNPIVYAYKIKKFKETYLLILKACVICQPSKSMDPSIEQTSE</sequence>
<keyword id="KW-1003">Cell membrane</keyword>
<keyword id="KW-1015">Disulfide bond</keyword>
<keyword id="KW-0297">G-protein coupled receptor</keyword>
<keyword id="KW-0325">Glycoprotein</keyword>
<keyword id="KW-0449">Lipoprotein</keyword>
<keyword id="KW-0472">Membrane</keyword>
<keyword id="KW-0564">Palmitate</keyword>
<keyword id="KW-0597">Phosphoprotein</keyword>
<keyword id="KW-0675">Receptor</keyword>
<keyword id="KW-1185">Reference proteome</keyword>
<keyword id="KW-0807">Transducer</keyword>
<keyword id="KW-0812">Transmembrane</keyword>
<keyword id="KW-1133">Transmembrane helix</keyword>
<organism>
    <name type="scientific">Bos taurus</name>
    <name type="common">Bovine</name>
    <dbReference type="NCBI Taxonomy" id="9913"/>
    <lineage>
        <taxon>Eukaryota</taxon>
        <taxon>Metazoa</taxon>
        <taxon>Chordata</taxon>
        <taxon>Craniata</taxon>
        <taxon>Vertebrata</taxon>
        <taxon>Euteleostomi</taxon>
        <taxon>Mammalia</taxon>
        <taxon>Eutheria</taxon>
        <taxon>Laurasiatheria</taxon>
        <taxon>Artiodactyla</taxon>
        <taxon>Ruminantia</taxon>
        <taxon>Pecora</taxon>
        <taxon>Bovidae</taxon>
        <taxon>Bovinae</taxon>
        <taxon>Bos</taxon>
    </lineage>
</organism>
<evidence type="ECO:0000250" key="1"/>
<evidence type="ECO:0000250" key="2">
    <source>
        <dbReference type="UniProtKB" id="P0DMS8"/>
    </source>
</evidence>
<evidence type="ECO:0000250" key="3">
    <source>
        <dbReference type="UniProtKB" id="P28647"/>
    </source>
</evidence>
<evidence type="ECO:0000250" key="4">
    <source>
        <dbReference type="UniProtKB" id="Q28309"/>
    </source>
</evidence>
<evidence type="ECO:0000255" key="5"/>
<evidence type="ECO:0000255" key="6">
    <source>
        <dbReference type="PROSITE-ProRule" id="PRU00521"/>
    </source>
</evidence>
<protein>
    <recommendedName>
        <fullName>Adenosine receptor A3</fullName>
    </recommendedName>
</protein>
<reference key="1">
    <citation type="submission" date="2006-08" db="EMBL/GenBank/DDBJ databases">
        <authorList>
            <consortium name="NIH - Mammalian Gene Collection (MGC) project"/>
        </authorList>
    </citation>
    <scope>NUCLEOTIDE SEQUENCE [LARGE SCALE MRNA]</scope>
    <source>
        <strain>Hereford</strain>
        <tissue>Hippocampus</tissue>
    </source>
</reference>
<name>AA3R_BOVIN</name>
<feature type="chain" id="PRO_0000290008" description="Adenosine receptor A3">
    <location>
        <begin position="1"/>
        <end position="317"/>
    </location>
</feature>
<feature type="topological domain" description="Extracellular" evidence="1">
    <location>
        <begin position="1"/>
        <end position="14"/>
    </location>
</feature>
<feature type="transmembrane region" description="Helical; Name=1" evidence="1">
    <location>
        <begin position="15"/>
        <end position="37"/>
    </location>
</feature>
<feature type="topological domain" description="Cytoplasmic" evidence="1">
    <location>
        <begin position="38"/>
        <end position="48"/>
    </location>
</feature>
<feature type="transmembrane region" description="Helical; Name=2" evidence="1">
    <location>
        <begin position="49"/>
        <end position="72"/>
    </location>
</feature>
<feature type="topological domain" description="Extracellular" evidence="1">
    <location>
        <begin position="73"/>
        <end position="84"/>
    </location>
</feature>
<feature type="transmembrane region" description="Helical; Name=3" evidence="1">
    <location>
        <begin position="85"/>
        <end position="106"/>
    </location>
</feature>
<feature type="topological domain" description="Cytoplasmic" evidence="1">
    <location>
        <begin position="107"/>
        <end position="126"/>
    </location>
</feature>
<feature type="transmembrane region" description="Helical; Name=4" evidence="1">
    <location>
        <begin position="127"/>
        <end position="148"/>
    </location>
</feature>
<feature type="topological domain" description="Extracellular" evidence="1">
    <location>
        <begin position="149"/>
        <end position="176"/>
    </location>
</feature>
<feature type="transmembrane region" description="Helical; Name=5" evidence="1">
    <location>
        <begin position="177"/>
        <end position="197"/>
    </location>
</feature>
<feature type="topological domain" description="Cytoplasmic" evidence="1">
    <location>
        <begin position="198"/>
        <end position="230"/>
    </location>
</feature>
<feature type="transmembrane region" description="Helical; Name=6" evidence="1">
    <location>
        <begin position="231"/>
        <end position="254"/>
    </location>
</feature>
<feature type="topological domain" description="Extracellular" evidence="1">
    <location>
        <begin position="255"/>
        <end position="260"/>
    </location>
</feature>
<feature type="transmembrane region" description="Helical; Name=7" evidence="1">
    <location>
        <begin position="261"/>
        <end position="283"/>
    </location>
</feature>
<feature type="topological domain" description="Cytoplasmic" evidence="1">
    <location>
        <begin position="284"/>
        <end position="317"/>
    </location>
</feature>
<feature type="lipid moiety-binding region" description="S-palmitoyl cysteine" evidence="5">
    <location>
        <position position="302"/>
    </location>
</feature>
<feature type="glycosylation site" description="N-linked (GlcNAc...) asparagine" evidence="5">
    <location>
        <position position="4"/>
    </location>
</feature>
<feature type="disulfide bond" evidence="6">
    <location>
        <begin position="83"/>
        <end position="165"/>
    </location>
</feature>
<gene>
    <name type="primary">ADORA3</name>
</gene>